<reference key="1">
    <citation type="journal article" date="2009" name="Infect. Immun.">
        <title>Comparative genomics reveal extensive transposon-mediated genomic plasticity and diversity among potential effector proteins within the genus Coxiella.</title>
        <authorList>
            <person name="Beare P.A."/>
            <person name="Unsworth N."/>
            <person name="Andoh M."/>
            <person name="Voth D.E."/>
            <person name="Omsland A."/>
            <person name="Gilk S.D."/>
            <person name="Williams K.P."/>
            <person name="Sobral B.W."/>
            <person name="Kupko J.J. III"/>
            <person name="Porcella S.F."/>
            <person name="Samuel J.E."/>
            <person name="Heinzen R.A."/>
        </authorList>
    </citation>
    <scope>NUCLEOTIDE SEQUENCE [LARGE SCALE GENOMIC DNA]</scope>
    <source>
        <strain>CbuG_Q212</strain>
    </source>
</reference>
<feature type="chain" id="PRO_1000098877" description="Inner membrane-spanning protein YciB">
    <location>
        <begin position="1"/>
        <end position="181"/>
    </location>
</feature>
<feature type="transmembrane region" description="Helical" evidence="1">
    <location>
        <begin position="8"/>
        <end position="28"/>
    </location>
</feature>
<feature type="transmembrane region" description="Helical" evidence="1">
    <location>
        <begin position="53"/>
        <end position="73"/>
    </location>
</feature>
<feature type="transmembrane region" description="Helical" evidence="1">
    <location>
        <begin position="76"/>
        <end position="96"/>
    </location>
</feature>
<feature type="transmembrane region" description="Helical" evidence="1">
    <location>
        <begin position="121"/>
        <end position="141"/>
    </location>
</feature>
<feature type="transmembrane region" description="Helical" evidence="1">
    <location>
        <begin position="149"/>
        <end position="169"/>
    </location>
</feature>
<comment type="function">
    <text evidence="1">Plays a role in cell envelope biogenesis, maintenance of cell envelope integrity and membrane homeostasis.</text>
</comment>
<comment type="subcellular location">
    <subcellularLocation>
        <location evidence="1">Cell inner membrane</location>
        <topology evidence="1">Multi-pass membrane protein</topology>
    </subcellularLocation>
</comment>
<comment type="similarity">
    <text evidence="1">Belongs to the YciB family.</text>
</comment>
<gene>
    <name evidence="1" type="primary">yciB</name>
    <name type="ordered locus">CbuG_1096</name>
</gene>
<proteinExistence type="inferred from homology"/>
<sequence>MKFLFDYFPIICFFVAYKFWGIYIATAAAMVVSALQVAIYWIRFRRFEKFHVITLIFILLLGSFTLVFHNAIFIKWKPTIVYWIFAIVLFGSHFFGKHTLVHRMLKEKIELPAKTWSRLNLSWALFFLILGVLNLFVVYNFDTNTWVNFKLFGTLVLMLVFILGQAFYIARHAQNLKMNSR</sequence>
<accession>B6J0F8</accession>
<dbReference type="EMBL" id="CP001019">
    <property type="protein sequence ID" value="ACJ18436.1"/>
    <property type="molecule type" value="Genomic_DNA"/>
</dbReference>
<dbReference type="RefSeq" id="WP_012570088.1">
    <property type="nucleotide sequence ID" value="NC_011527.1"/>
</dbReference>
<dbReference type="KEGG" id="cbg:CbuG_1096"/>
<dbReference type="HOGENOM" id="CLU_089554_2_0_6"/>
<dbReference type="GO" id="GO:0005886">
    <property type="term" value="C:plasma membrane"/>
    <property type="evidence" value="ECO:0007669"/>
    <property type="project" value="UniProtKB-SubCell"/>
</dbReference>
<dbReference type="HAMAP" id="MF_00189">
    <property type="entry name" value="YciB"/>
    <property type="match status" value="1"/>
</dbReference>
<dbReference type="InterPro" id="IPR006008">
    <property type="entry name" value="YciB"/>
</dbReference>
<dbReference type="NCBIfam" id="TIGR00997">
    <property type="entry name" value="ispZ"/>
    <property type="match status" value="1"/>
</dbReference>
<dbReference type="NCBIfam" id="NF001325">
    <property type="entry name" value="PRK00259.1-3"/>
    <property type="match status" value="1"/>
</dbReference>
<dbReference type="PANTHER" id="PTHR36917:SF1">
    <property type="entry name" value="INNER MEMBRANE-SPANNING PROTEIN YCIB"/>
    <property type="match status" value="1"/>
</dbReference>
<dbReference type="PANTHER" id="PTHR36917">
    <property type="entry name" value="INTRACELLULAR SEPTATION PROTEIN A-RELATED"/>
    <property type="match status" value="1"/>
</dbReference>
<dbReference type="Pfam" id="PF04279">
    <property type="entry name" value="IspA"/>
    <property type="match status" value="1"/>
</dbReference>
<evidence type="ECO:0000255" key="1">
    <source>
        <dbReference type="HAMAP-Rule" id="MF_00189"/>
    </source>
</evidence>
<protein>
    <recommendedName>
        <fullName evidence="1">Inner membrane-spanning protein YciB</fullName>
    </recommendedName>
</protein>
<keyword id="KW-0997">Cell inner membrane</keyword>
<keyword id="KW-1003">Cell membrane</keyword>
<keyword id="KW-0472">Membrane</keyword>
<keyword id="KW-0812">Transmembrane</keyword>
<keyword id="KW-1133">Transmembrane helix</keyword>
<name>YCIB_COXB2</name>
<organism>
    <name type="scientific">Coxiella burnetii (strain CbuG_Q212)</name>
    <name type="common">Coxiella burnetii (strain Q212)</name>
    <dbReference type="NCBI Taxonomy" id="434923"/>
    <lineage>
        <taxon>Bacteria</taxon>
        <taxon>Pseudomonadati</taxon>
        <taxon>Pseudomonadota</taxon>
        <taxon>Gammaproteobacteria</taxon>
        <taxon>Legionellales</taxon>
        <taxon>Coxiellaceae</taxon>
        <taxon>Coxiella</taxon>
    </lineage>
</organism>